<name>SYE_CHLFF</name>
<sequence>MAWENVRVRVAPSPTGDPHVGTAYMALFNEIFAKRFKGKMILRIEDTDRTRSRDDYEKNIFSALQWCGIQWDEGPDVGGPCGPYRQSERTEIYKKYAELLLKTDYAYKCFATPKELEEMRAVATTLGYRGGYDRRYRYLSPEEIEARTLEGQPYTIRLKVPLTGECVLEDYCKGRVVFPWADVDDQVLIKSDGFPTYHFANVVDDHLMGITHVLRGEEWLSSTPKHLLLYEAFGWKAPTFLHMPLLLNPDGTKLSKRKNPTSIFYYRDSGYVKEAFVNFLTLMGYSMEGDEEVYSLEKLIENFDPKRIGKSGAVFDTRKLDWMNKHYLTHDGSPEHLLSRLKDWLINDEFFLKILPLCQSRITTLAEFIGFTGFFFSVLPEYTKEELLPAAISAEKAAILLYSYVKYLEKADLWVKDQFYQGSKWLSEAFQVHHKKVVIPLLYVAITGKKQGLPLFDSMELLGKPRTRMRIVHAQNLLGGVPKKVQAVIDKVLKEEDFESKTLEF</sequence>
<keyword id="KW-0030">Aminoacyl-tRNA synthetase</keyword>
<keyword id="KW-0067">ATP-binding</keyword>
<keyword id="KW-0963">Cytoplasm</keyword>
<keyword id="KW-0436">Ligase</keyword>
<keyword id="KW-0547">Nucleotide-binding</keyword>
<keyword id="KW-0648">Protein biosynthesis</keyword>
<comment type="function">
    <text evidence="1">Catalyzes the attachment of glutamate to tRNA(Glu) in a two-step reaction: glutamate is first activated by ATP to form Glu-AMP and then transferred to the acceptor end of tRNA(Glu).</text>
</comment>
<comment type="catalytic activity">
    <reaction evidence="1">
        <text>tRNA(Glu) + L-glutamate + ATP = L-glutamyl-tRNA(Glu) + AMP + diphosphate</text>
        <dbReference type="Rhea" id="RHEA:23540"/>
        <dbReference type="Rhea" id="RHEA-COMP:9663"/>
        <dbReference type="Rhea" id="RHEA-COMP:9680"/>
        <dbReference type="ChEBI" id="CHEBI:29985"/>
        <dbReference type="ChEBI" id="CHEBI:30616"/>
        <dbReference type="ChEBI" id="CHEBI:33019"/>
        <dbReference type="ChEBI" id="CHEBI:78442"/>
        <dbReference type="ChEBI" id="CHEBI:78520"/>
        <dbReference type="ChEBI" id="CHEBI:456215"/>
        <dbReference type="EC" id="6.1.1.17"/>
    </reaction>
</comment>
<comment type="subunit">
    <text evidence="1">Monomer.</text>
</comment>
<comment type="subcellular location">
    <subcellularLocation>
        <location evidence="1">Cytoplasm</location>
    </subcellularLocation>
</comment>
<comment type="similarity">
    <text evidence="1">Belongs to the class-I aminoacyl-tRNA synthetase family. Glutamate--tRNA ligase type 1 subfamily.</text>
</comment>
<gene>
    <name evidence="1" type="primary">gltX</name>
    <name type="ordered locus">CF0824</name>
</gene>
<reference key="1">
    <citation type="journal article" date="2006" name="DNA Res.">
        <title>Genome sequence of the cat pathogen, Chlamydophila felis.</title>
        <authorList>
            <person name="Azuma Y."/>
            <person name="Hirakawa H."/>
            <person name="Yamashita A."/>
            <person name="Cai Y."/>
            <person name="Rahman M.A."/>
            <person name="Suzuki H."/>
            <person name="Mitaku S."/>
            <person name="Toh H."/>
            <person name="Goto S."/>
            <person name="Murakami T."/>
            <person name="Sugi K."/>
            <person name="Hayashi H."/>
            <person name="Fukushi H."/>
            <person name="Hattori M."/>
            <person name="Kuhara S."/>
            <person name="Shirai M."/>
        </authorList>
    </citation>
    <scope>NUCLEOTIDE SEQUENCE [LARGE SCALE GENOMIC DNA]</scope>
    <source>
        <strain>Fe/C-56</strain>
    </source>
</reference>
<dbReference type="EC" id="6.1.1.17" evidence="1"/>
<dbReference type="EMBL" id="AP006861">
    <property type="protein sequence ID" value="BAE81596.1"/>
    <property type="molecule type" value="Genomic_DNA"/>
</dbReference>
<dbReference type="RefSeq" id="WP_011458371.1">
    <property type="nucleotide sequence ID" value="NC_007899.1"/>
</dbReference>
<dbReference type="SMR" id="Q253E2"/>
<dbReference type="STRING" id="264202.CF0824"/>
<dbReference type="KEGG" id="cfe:CF0824"/>
<dbReference type="eggNOG" id="COG0008">
    <property type="taxonomic scope" value="Bacteria"/>
</dbReference>
<dbReference type="HOGENOM" id="CLU_015768_6_3_0"/>
<dbReference type="OrthoDB" id="9807503at2"/>
<dbReference type="Proteomes" id="UP000001260">
    <property type="component" value="Chromosome"/>
</dbReference>
<dbReference type="GO" id="GO:0005829">
    <property type="term" value="C:cytosol"/>
    <property type="evidence" value="ECO:0007669"/>
    <property type="project" value="TreeGrafter"/>
</dbReference>
<dbReference type="GO" id="GO:0005524">
    <property type="term" value="F:ATP binding"/>
    <property type="evidence" value="ECO:0007669"/>
    <property type="project" value="UniProtKB-UniRule"/>
</dbReference>
<dbReference type="GO" id="GO:0004818">
    <property type="term" value="F:glutamate-tRNA ligase activity"/>
    <property type="evidence" value="ECO:0007669"/>
    <property type="project" value="UniProtKB-UniRule"/>
</dbReference>
<dbReference type="GO" id="GO:0000049">
    <property type="term" value="F:tRNA binding"/>
    <property type="evidence" value="ECO:0007669"/>
    <property type="project" value="InterPro"/>
</dbReference>
<dbReference type="GO" id="GO:0008270">
    <property type="term" value="F:zinc ion binding"/>
    <property type="evidence" value="ECO:0007669"/>
    <property type="project" value="InterPro"/>
</dbReference>
<dbReference type="GO" id="GO:0006424">
    <property type="term" value="P:glutamyl-tRNA aminoacylation"/>
    <property type="evidence" value="ECO:0007669"/>
    <property type="project" value="UniProtKB-UniRule"/>
</dbReference>
<dbReference type="CDD" id="cd00808">
    <property type="entry name" value="GluRS_core"/>
    <property type="match status" value="1"/>
</dbReference>
<dbReference type="FunFam" id="3.40.50.620:FF:000045">
    <property type="entry name" value="Glutamate--tRNA ligase, mitochondrial"/>
    <property type="match status" value="1"/>
</dbReference>
<dbReference type="Gene3D" id="1.10.10.350">
    <property type="match status" value="1"/>
</dbReference>
<dbReference type="Gene3D" id="3.40.50.620">
    <property type="entry name" value="HUPs"/>
    <property type="match status" value="1"/>
</dbReference>
<dbReference type="HAMAP" id="MF_00022">
    <property type="entry name" value="Glu_tRNA_synth_type1"/>
    <property type="match status" value="1"/>
</dbReference>
<dbReference type="InterPro" id="IPR045462">
    <property type="entry name" value="aa-tRNA-synth_I_cd-bd"/>
</dbReference>
<dbReference type="InterPro" id="IPR020751">
    <property type="entry name" value="aa-tRNA-synth_I_codon-bd_sub2"/>
</dbReference>
<dbReference type="InterPro" id="IPR001412">
    <property type="entry name" value="aa-tRNA-synth_I_CS"/>
</dbReference>
<dbReference type="InterPro" id="IPR008925">
    <property type="entry name" value="aa_tRNA-synth_I_cd-bd_sf"/>
</dbReference>
<dbReference type="InterPro" id="IPR004527">
    <property type="entry name" value="Glu-tRNA-ligase_bac/mito"/>
</dbReference>
<dbReference type="InterPro" id="IPR000924">
    <property type="entry name" value="Glu/Gln-tRNA-synth"/>
</dbReference>
<dbReference type="InterPro" id="IPR020058">
    <property type="entry name" value="Glu/Gln-tRNA-synth_Ib_cat-dom"/>
</dbReference>
<dbReference type="InterPro" id="IPR049940">
    <property type="entry name" value="GluQ/Sye"/>
</dbReference>
<dbReference type="InterPro" id="IPR033910">
    <property type="entry name" value="GluRS_core"/>
</dbReference>
<dbReference type="InterPro" id="IPR014729">
    <property type="entry name" value="Rossmann-like_a/b/a_fold"/>
</dbReference>
<dbReference type="NCBIfam" id="TIGR00464">
    <property type="entry name" value="gltX_bact"/>
    <property type="match status" value="1"/>
</dbReference>
<dbReference type="PANTHER" id="PTHR43311">
    <property type="entry name" value="GLUTAMATE--TRNA LIGASE"/>
    <property type="match status" value="1"/>
</dbReference>
<dbReference type="PANTHER" id="PTHR43311:SF2">
    <property type="entry name" value="GLUTAMATE--TRNA LIGASE, MITOCHONDRIAL-RELATED"/>
    <property type="match status" value="1"/>
</dbReference>
<dbReference type="Pfam" id="PF19269">
    <property type="entry name" value="Anticodon_2"/>
    <property type="match status" value="1"/>
</dbReference>
<dbReference type="Pfam" id="PF00749">
    <property type="entry name" value="tRNA-synt_1c"/>
    <property type="match status" value="1"/>
</dbReference>
<dbReference type="PRINTS" id="PR00987">
    <property type="entry name" value="TRNASYNTHGLU"/>
</dbReference>
<dbReference type="SUPFAM" id="SSF48163">
    <property type="entry name" value="An anticodon-binding domain of class I aminoacyl-tRNA synthetases"/>
    <property type="match status" value="1"/>
</dbReference>
<dbReference type="SUPFAM" id="SSF52374">
    <property type="entry name" value="Nucleotidylyl transferase"/>
    <property type="match status" value="1"/>
</dbReference>
<dbReference type="PROSITE" id="PS00178">
    <property type="entry name" value="AA_TRNA_LIGASE_I"/>
    <property type="match status" value="1"/>
</dbReference>
<feature type="chain" id="PRO_1000001886" description="Glutamate--tRNA ligase">
    <location>
        <begin position="1"/>
        <end position="505"/>
    </location>
</feature>
<feature type="short sequence motif" description="'HIGH' region" evidence="1">
    <location>
        <begin position="12"/>
        <end position="22"/>
    </location>
</feature>
<feature type="short sequence motif" description="'KMSKS' region" evidence="1">
    <location>
        <begin position="253"/>
        <end position="257"/>
    </location>
</feature>
<feature type="binding site" evidence="1">
    <location>
        <position position="256"/>
    </location>
    <ligand>
        <name>ATP</name>
        <dbReference type="ChEBI" id="CHEBI:30616"/>
    </ligand>
</feature>
<organism>
    <name type="scientific">Chlamydia felis (strain Fe/C-56)</name>
    <name type="common">Chlamydophila felis</name>
    <dbReference type="NCBI Taxonomy" id="264202"/>
    <lineage>
        <taxon>Bacteria</taxon>
        <taxon>Pseudomonadati</taxon>
        <taxon>Chlamydiota</taxon>
        <taxon>Chlamydiia</taxon>
        <taxon>Chlamydiales</taxon>
        <taxon>Chlamydiaceae</taxon>
        <taxon>Chlamydia/Chlamydophila group</taxon>
        <taxon>Chlamydia</taxon>
    </lineage>
</organism>
<proteinExistence type="inferred from homology"/>
<accession>Q253E2</accession>
<evidence type="ECO:0000255" key="1">
    <source>
        <dbReference type="HAMAP-Rule" id="MF_00022"/>
    </source>
</evidence>
<protein>
    <recommendedName>
        <fullName evidence="1">Glutamate--tRNA ligase</fullName>
        <ecNumber evidence="1">6.1.1.17</ecNumber>
    </recommendedName>
    <alternativeName>
        <fullName evidence="1">Glutamyl-tRNA synthetase</fullName>
        <shortName evidence="1">GluRS</shortName>
    </alternativeName>
</protein>